<keyword id="KW-0217">Developmental protein</keyword>
<keyword id="KW-0221">Differentiation</keyword>
<keyword id="KW-0274">FAD</keyword>
<keyword id="KW-0285">Flavoprotein</keyword>
<keyword id="KW-0341">Growth regulation</keyword>
<keyword id="KW-0503">Monooxygenase</keyword>
<keyword id="KW-0521">NADP</keyword>
<keyword id="KW-0560">Oxidoreductase</keyword>
<keyword id="KW-0597">Phosphoprotein</keyword>
<keyword id="KW-1267">Proteomics identification</keyword>
<keyword id="KW-1185">Reference proteome</keyword>
<protein>
    <recommendedName>
        <fullName evidence="6">Oxidative stress-induced growth inhibitor 1</fullName>
        <ecNumber evidence="3">1.14.13.-</ecNumber>
    </recommendedName>
    <alternativeName>
        <fullName evidence="5">Bone marrow stromal cell-derived growth inhibitor</fullName>
        <shortName evidence="5">BMSC-derived growth inhibitor</shortName>
    </alternativeName>
    <alternativeName>
        <fullName>Ovary, kidney and liver protein 38</fullName>
        <shortName>huOKL38</shortName>
    </alternativeName>
    <alternativeName>
        <fullName evidence="7">Pregnancy-induced growth inhibitor OKL38</fullName>
    </alternativeName>
</protein>
<reference key="1">
    <citation type="journal article" date="2004" name="J. Biol. Chem.">
        <title>Genomic structure of human OKL38 gene and its differential expression in kidney carcinogenesis.</title>
        <authorList>
            <person name="Ong C.K."/>
            <person name="Ng C.Y."/>
            <person name="Leong C."/>
            <person name="Ng C.P."/>
            <person name="Foo K.T."/>
            <person name="Tan P.H."/>
            <person name="Huynh H.T."/>
        </authorList>
    </citation>
    <scope>NUCLEOTIDE SEQUENCE [GENOMIC DNA / MRNA]</scope>
    <scope>FUNCTION</scope>
    <scope>TISSUE SPECIFICITY</scope>
</reference>
<reference key="2">
    <citation type="journal article" date="2005" name="J. Biol. Chem.">
        <title>Bone marrow stromal cell-derived growth inhibitor inhibits growth and migration of breast cancer cells via induction of cell cycle arrest and apoptosis.</title>
        <authorList>
            <person name="Wang T."/>
            <person name="Xia D."/>
            <person name="Li N."/>
            <person name="Wang C."/>
            <person name="Chen T."/>
            <person name="Wan T."/>
            <person name="Chen G."/>
            <person name="Cao X."/>
        </authorList>
    </citation>
    <scope>NUCLEOTIDE SEQUENCE [MRNA]</scope>
</reference>
<reference key="3">
    <citation type="journal article" date="2004" name="Nat. Genet.">
        <title>Complete sequencing and characterization of 21,243 full-length human cDNAs.</title>
        <authorList>
            <person name="Ota T."/>
            <person name="Suzuki Y."/>
            <person name="Nishikawa T."/>
            <person name="Otsuki T."/>
            <person name="Sugiyama T."/>
            <person name="Irie R."/>
            <person name="Wakamatsu A."/>
            <person name="Hayashi K."/>
            <person name="Sato H."/>
            <person name="Nagai K."/>
            <person name="Kimura K."/>
            <person name="Makita H."/>
            <person name="Sekine M."/>
            <person name="Obayashi M."/>
            <person name="Nishi T."/>
            <person name="Shibahara T."/>
            <person name="Tanaka T."/>
            <person name="Ishii S."/>
            <person name="Yamamoto J."/>
            <person name="Saito K."/>
            <person name="Kawai Y."/>
            <person name="Isono Y."/>
            <person name="Nakamura Y."/>
            <person name="Nagahari K."/>
            <person name="Murakami K."/>
            <person name="Yasuda T."/>
            <person name="Iwayanagi T."/>
            <person name="Wagatsuma M."/>
            <person name="Shiratori A."/>
            <person name="Sudo H."/>
            <person name="Hosoiri T."/>
            <person name="Kaku Y."/>
            <person name="Kodaira H."/>
            <person name="Kondo H."/>
            <person name="Sugawara M."/>
            <person name="Takahashi M."/>
            <person name="Kanda K."/>
            <person name="Yokoi T."/>
            <person name="Furuya T."/>
            <person name="Kikkawa E."/>
            <person name="Omura Y."/>
            <person name="Abe K."/>
            <person name="Kamihara K."/>
            <person name="Katsuta N."/>
            <person name="Sato K."/>
            <person name="Tanikawa M."/>
            <person name="Yamazaki M."/>
            <person name="Ninomiya K."/>
            <person name="Ishibashi T."/>
            <person name="Yamashita H."/>
            <person name="Murakawa K."/>
            <person name="Fujimori K."/>
            <person name="Tanai H."/>
            <person name="Kimata M."/>
            <person name="Watanabe M."/>
            <person name="Hiraoka S."/>
            <person name="Chiba Y."/>
            <person name="Ishida S."/>
            <person name="Ono Y."/>
            <person name="Takiguchi S."/>
            <person name="Watanabe S."/>
            <person name="Yosida M."/>
            <person name="Hotuta T."/>
            <person name="Kusano J."/>
            <person name="Kanehori K."/>
            <person name="Takahashi-Fujii A."/>
            <person name="Hara H."/>
            <person name="Tanase T.-O."/>
            <person name="Nomura Y."/>
            <person name="Togiya S."/>
            <person name="Komai F."/>
            <person name="Hara R."/>
            <person name="Takeuchi K."/>
            <person name="Arita M."/>
            <person name="Imose N."/>
            <person name="Musashino K."/>
            <person name="Yuuki H."/>
            <person name="Oshima A."/>
            <person name="Sasaki N."/>
            <person name="Aotsuka S."/>
            <person name="Yoshikawa Y."/>
            <person name="Matsunawa H."/>
            <person name="Ichihara T."/>
            <person name="Shiohata N."/>
            <person name="Sano S."/>
            <person name="Moriya S."/>
            <person name="Momiyama H."/>
            <person name="Satoh N."/>
            <person name="Takami S."/>
            <person name="Terashima Y."/>
            <person name="Suzuki O."/>
            <person name="Nakagawa S."/>
            <person name="Senoh A."/>
            <person name="Mizoguchi H."/>
            <person name="Goto Y."/>
            <person name="Shimizu F."/>
            <person name="Wakebe H."/>
            <person name="Hishigaki H."/>
            <person name="Watanabe T."/>
            <person name="Sugiyama A."/>
            <person name="Takemoto M."/>
            <person name="Kawakami B."/>
            <person name="Yamazaki M."/>
            <person name="Watanabe K."/>
            <person name="Kumagai A."/>
            <person name="Itakura S."/>
            <person name="Fukuzumi Y."/>
            <person name="Fujimori Y."/>
            <person name="Komiyama M."/>
            <person name="Tashiro H."/>
            <person name="Tanigami A."/>
            <person name="Fujiwara T."/>
            <person name="Ono T."/>
            <person name="Yamada K."/>
            <person name="Fujii Y."/>
            <person name="Ozaki K."/>
            <person name="Hirao M."/>
            <person name="Ohmori Y."/>
            <person name="Kawabata A."/>
            <person name="Hikiji T."/>
            <person name="Kobatake N."/>
            <person name="Inagaki H."/>
            <person name="Ikema Y."/>
            <person name="Okamoto S."/>
            <person name="Okitani R."/>
            <person name="Kawakami T."/>
            <person name="Noguchi S."/>
            <person name="Itoh T."/>
            <person name="Shigeta K."/>
            <person name="Senba T."/>
            <person name="Matsumura K."/>
            <person name="Nakajima Y."/>
            <person name="Mizuno T."/>
            <person name="Morinaga M."/>
            <person name="Sasaki M."/>
            <person name="Togashi T."/>
            <person name="Oyama M."/>
            <person name="Hata H."/>
            <person name="Watanabe M."/>
            <person name="Komatsu T."/>
            <person name="Mizushima-Sugano J."/>
            <person name="Satoh T."/>
            <person name="Shirai Y."/>
            <person name="Takahashi Y."/>
            <person name="Nakagawa K."/>
            <person name="Okumura K."/>
            <person name="Nagase T."/>
            <person name="Nomura N."/>
            <person name="Kikuchi H."/>
            <person name="Masuho Y."/>
            <person name="Yamashita R."/>
            <person name="Nakai K."/>
            <person name="Yada T."/>
            <person name="Nakamura Y."/>
            <person name="Ohara O."/>
            <person name="Isogai T."/>
            <person name="Sugano S."/>
        </authorList>
    </citation>
    <scope>NUCLEOTIDE SEQUENCE [LARGE SCALE MRNA]</scope>
</reference>
<reference key="4">
    <citation type="journal article" date="2004" name="Nature">
        <title>The sequence and analysis of duplication-rich human chromosome 16.</title>
        <authorList>
            <person name="Martin J."/>
            <person name="Han C."/>
            <person name="Gordon L.A."/>
            <person name="Terry A."/>
            <person name="Prabhakar S."/>
            <person name="She X."/>
            <person name="Xie G."/>
            <person name="Hellsten U."/>
            <person name="Chan Y.M."/>
            <person name="Altherr M."/>
            <person name="Couronne O."/>
            <person name="Aerts A."/>
            <person name="Bajorek E."/>
            <person name="Black S."/>
            <person name="Blumer H."/>
            <person name="Branscomb E."/>
            <person name="Brown N.C."/>
            <person name="Bruno W.J."/>
            <person name="Buckingham J.M."/>
            <person name="Callen D.F."/>
            <person name="Campbell C.S."/>
            <person name="Campbell M.L."/>
            <person name="Campbell E.W."/>
            <person name="Caoile C."/>
            <person name="Challacombe J.F."/>
            <person name="Chasteen L.A."/>
            <person name="Chertkov O."/>
            <person name="Chi H.C."/>
            <person name="Christensen M."/>
            <person name="Clark L.M."/>
            <person name="Cohn J.D."/>
            <person name="Denys M."/>
            <person name="Detter J.C."/>
            <person name="Dickson M."/>
            <person name="Dimitrijevic-Bussod M."/>
            <person name="Escobar J."/>
            <person name="Fawcett J.J."/>
            <person name="Flowers D."/>
            <person name="Fotopulos D."/>
            <person name="Glavina T."/>
            <person name="Gomez M."/>
            <person name="Gonzales E."/>
            <person name="Goodstein D."/>
            <person name="Goodwin L.A."/>
            <person name="Grady D.L."/>
            <person name="Grigoriev I."/>
            <person name="Groza M."/>
            <person name="Hammon N."/>
            <person name="Hawkins T."/>
            <person name="Haydu L."/>
            <person name="Hildebrand C.E."/>
            <person name="Huang W."/>
            <person name="Israni S."/>
            <person name="Jett J."/>
            <person name="Jewett P.B."/>
            <person name="Kadner K."/>
            <person name="Kimball H."/>
            <person name="Kobayashi A."/>
            <person name="Krawczyk M.-C."/>
            <person name="Leyba T."/>
            <person name="Longmire J.L."/>
            <person name="Lopez F."/>
            <person name="Lou Y."/>
            <person name="Lowry S."/>
            <person name="Ludeman T."/>
            <person name="Manohar C.F."/>
            <person name="Mark G.A."/>
            <person name="McMurray K.L."/>
            <person name="Meincke L.J."/>
            <person name="Morgan J."/>
            <person name="Moyzis R.K."/>
            <person name="Mundt M.O."/>
            <person name="Munk A.C."/>
            <person name="Nandkeshwar R.D."/>
            <person name="Pitluck S."/>
            <person name="Pollard M."/>
            <person name="Predki P."/>
            <person name="Parson-Quintana B."/>
            <person name="Ramirez L."/>
            <person name="Rash S."/>
            <person name="Retterer J."/>
            <person name="Ricke D.O."/>
            <person name="Robinson D.L."/>
            <person name="Rodriguez A."/>
            <person name="Salamov A."/>
            <person name="Saunders E.H."/>
            <person name="Scott D."/>
            <person name="Shough T."/>
            <person name="Stallings R.L."/>
            <person name="Stalvey M."/>
            <person name="Sutherland R.D."/>
            <person name="Tapia R."/>
            <person name="Tesmer J.G."/>
            <person name="Thayer N."/>
            <person name="Thompson L.S."/>
            <person name="Tice H."/>
            <person name="Torney D.C."/>
            <person name="Tran-Gyamfi M."/>
            <person name="Tsai M."/>
            <person name="Ulanovsky L.E."/>
            <person name="Ustaszewska A."/>
            <person name="Vo N."/>
            <person name="White P.S."/>
            <person name="Williams A.L."/>
            <person name="Wills P.L."/>
            <person name="Wu J.-R."/>
            <person name="Wu K."/>
            <person name="Yang J."/>
            <person name="DeJong P."/>
            <person name="Bruce D."/>
            <person name="Doggett N.A."/>
            <person name="Deaven L."/>
            <person name="Schmutz J."/>
            <person name="Grimwood J."/>
            <person name="Richardson P."/>
            <person name="Rokhsar D.S."/>
            <person name="Eichler E.E."/>
            <person name="Gilna P."/>
            <person name="Lucas S.M."/>
            <person name="Myers R.M."/>
            <person name="Rubin E.M."/>
            <person name="Pennacchio L.A."/>
        </authorList>
    </citation>
    <scope>NUCLEOTIDE SEQUENCE [LARGE SCALE GENOMIC DNA]</scope>
</reference>
<reference key="5">
    <citation type="submission" date="2005-07" db="EMBL/GenBank/DDBJ databases">
        <authorList>
            <person name="Mural R.J."/>
            <person name="Istrail S."/>
            <person name="Sutton G.G."/>
            <person name="Florea L."/>
            <person name="Halpern A.L."/>
            <person name="Mobarry C.M."/>
            <person name="Lippert R."/>
            <person name="Walenz B."/>
            <person name="Shatkay H."/>
            <person name="Dew I."/>
            <person name="Miller J.R."/>
            <person name="Flanigan M.J."/>
            <person name="Edwards N.J."/>
            <person name="Bolanos R."/>
            <person name="Fasulo D."/>
            <person name="Halldorsson B.V."/>
            <person name="Hannenhalli S."/>
            <person name="Turner R."/>
            <person name="Yooseph S."/>
            <person name="Lu F."/>
            <person name="Nusskern D.R."/>
            <person name="Shue B.C."/>
            <person name="Zheng X.H."/>
            <person name="Zhong F."/>
            <person name="Delcher A.L."/>
            <person name="Huson D.H."/>
            <person name="Kravitz S.A."/>
            <person name="Mouchard L."/>
            <person name="Reinert K."/>
            <person name="Remington K.A."/>
            <person name="Clark A.G."/>
            <person name="Waterman M.S."/>
            <person name="Eichler E.E."/>
            <person name="Adams M.D."/>
            <person name="Hunkapiller M.W."/>
            <person name="Myers E.W."/>
            <person name="Venter J.C."/>
        </authorList>
    </citation>
    <scope>NUCLEOTIDE SEQUENCE [LARGE SCALE GENOMIC DNA]</scope>
</reference>
<reference key="6">
    <citation type="journal article" date="2004" name="Genome Res.">
        <title>The status, quality, and expansion of the NIH full-length cDNA project: the Mammalian Gene Collection (MGC).</title>
        <authorList>
            <consortium name="The MGC Project Team"/>
        </authorList>
    </citation>
    <scope>NUCLEOTIDE SEQUENCE [LARGE SCALE MRNA]</scope>
    <source>
        <tissue>Leukocyte</tissue>
        <tissue>Liver</tissue>
    </source>
</reference>
<reference key="7">
    <citation type="journal article" date="2001" name="Endocrinology">
        <title>Cloning and characterization of a novel pregnancy-induced growth inhibitor in mammary gland.</title>
        <authorList>
            <person name="Huynh H.T."/>
            <person name="Ng C.Y."/>
            <person name="Ong C.K."/>
            <person name="Lim K.B."/>
            <person name="Chan T.W.M."/>
        </authorList>
    </citation>
    <scope>NUCLEOTIDE SEQUENCE [MRNA] OF 62-477</scope>
    <scope>FUNCTION</scope>
    <scope>TISSUE SPECIFICITY</scope>
    <source>
        <tissue>Mammary gland</tissue>
        <tissue>Ovary</tissue>
    </source>
</reference>
<reference key="8">
    <citation type="journal article" date="2014" name="J. Proteomics">
        <title>An enzyme assisted RP-RPLC approach for in-depth analysis of human liver phosphoproteome.</title>
        <authorList>
            <person name="Bian Y."/>
            <person name="Song C."/>
            <person name="Cheng K."/>
            <person name="Dong M."/>
            <person name="Wang F."/>
            <person name="Huang J."/>
            <person name="Sun D."/>
            <person name="Wang L."/>
            <person name="Ye M."/>
            <person name="Zou H."/>
        </authorList>
    </citation>
    <scope>PHOSPHORYLATION [LARGE SCALE ANALYSIS] AT SER-12</scope>
    <scope>IDENTIFICATION BY MASS SPECTROMETRY [LARGE SCALE ANALYSIS]</scope>
    <source>
        <tissue>Liver</tissue>
    </source>
</reference>
<reference evidence="6" key="9">
    <citation type="journal article" date="2024" name="Proc. Natl. Acad. Sci. U.S.A.">
        <title>OSGN-1 is a conserved flavin-containing monooxygenase required to stabilize the intercellular bridge in late cytokinesis.</title>
        <authorList>
            <person name="Goupil E."/>
            <person name="Lacroix L."/>
            <person name="Briere J."/>
            <person name="Guga S."/>
            <person name="Saba-El-Leil M.K."/>
            <person name="Meloche S."/>
            <person name="Labbe J.C."/>
        </authorList>
    </citation>
    <scope>FUNCTION</scope>
    <scope>CATALYTIC ACTIVITY</scope>
    <scope>COFACTOR</scope>
    <scope>SUBCELLULAR LOCATION</scope>
</reference>
<comment type="function">
    <text evidence="1 2 3">Monooxygenase catalytic activity (PubMed:38442170). Involved in regulation of cytokinesis; promotes RHOA activity, probably acting locally at the midbody in late cytokinesis (PubMed:38442170). Monooxygenase activity is involved in stabilizing transient structures between daughter cells, termed intercellular bridges, before abscission (PubMed:38442170). Regulates differentiation and proliferation through the regulation of cell death (PubMed:11459809, PubMed:14570898).</text>
</comment>
<comment type="cofactor">
    <cofactor evidence="3">
        <name>NADPH</name>
        <dbReference type="ChEBI" id="CHEBI:57783"/>
    </cofactor>
    <text evidence="3">No monooxygenase catalytic activity in the absence of NADPH.</text>
</comment>
<comment type="interaction">
    <interactant intactId="EBI-9057006">
        <id>Q9UJX0</id>
    </interactant>
    <interactant intactId="EBI-765971">
        <id>Q9HBZ2</id>
        <label>ARNT2</label>
    </interactant>
    <organismsDiffer>false</organismsDiffer>
    <experiments>3</experiments>
</comment>
<comment type="interaction">
    <interactant intactId="EBI-9057006">
        <id>Q9UJX0</id>
    </interactant>
    <interactant intactId="EBI-702336">
        <id>O75815</id>
        <label>BCAR3</label>
    </interactant>
    <organismsDiffer>false</organismsDiffer>
    <experiments>4</experiments>
</comment>
<comment type="interaction">
    <interactant intactId="EBI-9057006">
        <id>Q9UJX0</id>
    </interactant>
    <interactant intactId="EBI-10181188">
        <id>Q8N7W2-2</id>
        <label>BEND7</label>
    </interactant>
    <organismsDiffer>false</organismsDiffer>
    <experiments>3</experiments>
</comment>
<comment type="interaction">
    <interactant intactId="EBI-9057006">
        <id>Q9UJX0</id>
    </interactant>
    <interactant intactId="EBI-710091">
        <id>Q9BX70</id>
        <label>BTBD2</label>
    </interactant>
    <organismsDiffer>false</organismsDiffer>
    <experiments>3</experiments>
</comment>
<comment type="interaction">
    <interactant intactId="EBI-9057006">
        <id>Q9UJX0</id>
    </interactant>
    <interactant intactId="EBI-5655000">
        <id>P20807</id>
        <label>CAPN3</label>
    </interactant>
    <organismsDiffer>false</organismsDiffer>
    <experiments>4</experiments>
</comment>
<comment type="interaction">
    <interactant intactId="EBI-9057006">
        <id>Q9UJX0</id>
    </interactant>
    <interactant intactId="EBI-19948078">
        <id>Q96H22-3</id>
        <label>CENPN</label>
    </interactant>
    <organismsDiffer>false</organismsDiffer>
    <experiments>3</experiments>
</comment>
<comment type="interaction">
    <interactant intactId="EBI-9057006">
        <id>Q9UJX0</id>
    </interactant>
    <interactant intactId="EBI-748171">
        <id>O43186</id>
        <label>CRX</label>
    </interactant>
    <organismsDiffer>false</organismsDiffer>
    <experiments>3</experiments>
</comment>
<comment type="interaction">
    <interactant intactId="EBI-9057006">
        <id>Q9UJX0</id>
    </interactant>
    <interactant intactId="EBI-3937367">
        <id>Q9NUI1</id>
        <label>DECR2</label>
    </interactant>
    <organismsDiffer>false</organismsDiffer>
    <experiments>3</experiments>
</comment>
<comment type="interaction">
    <interactant intactId="EBI-9057006">
        <id>Q9UJX0</id>
    </interactant>
    <interactant intactId="EBI-3952284">
        <id>Q96EY1-2</id>
        <label>DNAJA3</label>
    </interactant>
    <organismsDiffer>false</organismsDiffer>
    <experiments>3</experiments>
</comment>
<comment type="interaction">
    <interactant intactId="EBI-9057006">
        <id>Q9UJX0</id>
    </interactant>
    <interactant intactId="EBI-1051387">
        <id>P48507</id>
        <label>GCLM</label>
    </interactant>
    <organismsDiffer>false</organismsDiffer>
    <experiments>3</experiments>
</comment>
<comment type="interaction">
    <interactant intactId="EBI-9057006">
        <id>Q9UJX0</id>
    </interactant>
    <interactant intactId="EBI-81279">
        <id>Q9Y6K9</id>
        <label>IKBKG</label>
    </interactant>
    <organismsDiffer>false</organismsDiffer>
    <experiments>3</experiments>
</comment>
<comment type="interaction">
    <interactant intactId="EBI-9057006">
        <id>Q9UJX0</id>
    </interactant>
    <interactant intactId="EBI-747204">
        <id>Q9UKT9</id>
        <label>IKZF3</label>
    </interactant>
    <organismsDiffer>false</organismsDiffer>
    <experiments>5</experiments>
</comment>
<comment type="interaction">
    <interactant intactId="EBI-9057006">
        <id>Q9UJX0</id>
    </interactant>
    <interactant intactId="EBI-6509505">
        <id>Q0VD86</id>
        <label>INCA1</label>
    </interactant>
    <organismsDiffer>false</organismsDiffer>
    <experiments>6</experiments>
</comment>
<comment type="interaction">
    <interactant intactId="EBI-9057006">
        <id>Q9UJX0</id>
    </interactant>
    <interactant intactId="EBI-715394">
        <id>Q9H079</id>
        <label>KATNBL1</label>
    </interactant>
    <organismsDiffer>false</organismsDiffer>
    <experiments>3</experiments>
</comment>
<comment type="interaction">
    <interactant intactId="EBI-9057006">
        <id>Q9UJX0</id>
    </interactant>
    <interactant intactId="EBI-2949715">
        <id>O95678</id>
        <label>KRT75</label>
    </interactant>
    <organismsDiffer>false</organismsDiffer>
    <experiments>3</experiments>
</comment>
<comment type="interaction">
    <interactant intactId="EBI-9057006">
        <id>Q9UJX0</id>
    </interactant>
    <interactant intactId="EBI-739832">
        <id>Q8TBB1</id>
        <label>LNX1</label>
    </interactant>
    <organismsDiffer>false</organismsDiffer>
    <experiments>6</experiments>
</comment>
<comment type="interaction">
    <interactant intactId="EBI-9057006">
        <id>Q9UJX0</id>
    </interactant>
    <interactant intactId="EBI-19944212">
        <id>A8MW99</id>
        <label>MEI4</label>
    </interactant>
    <organismsDiffer>false</organismsDiffer>
    <experiments>3</experiments>
</comment>
<comment type="interaction">
    <interactant intactId="EBI-9057006">
        <id>Q9UJX0</id>
    </interactant>
    <interactant intactId="EBI-2804934">
        <id>O14770</id>
        <label>MEIS2</label>
    </interactant>
    <organismsDiffer>false</organismsDiffer>
    <experiments>4</experiments>
</comment>
<comment type="interaction">
    <interactant intactId="EBI-9057006">
        <id>Q9UJX0</id>
    </interactant>
    <interactant intactId="EBI-2864512">
        <id>P50221</id>
        <label>MEOX1</label>
    </interactant>
    <organismsDiffer>false</organismsDiffer>
    <experiments>3</experiments>
</comment>
<comment type="interaction">
    <interactant intactId="EBI-9057006">
        <id>Q9UJX0</id>
    </interactant>
    <interactant intactId="EBI-748397">
        <id>P50222</id>
        <label>MEOX2</label>
    </interactant>
    <organismsDiffer>false</organismsDiffer>
    <experiments>3</experiments>
</comment>
<comment type="interaction">
    <interactant intactId="EBI-9057006">
        <id>Q9UJX0</id>
    </interactant>
    <interactant intactId="EBI-948435">
        <id>Q7Z6M4</id>
        <label>MTERF4</label>
    </interactant>
    <organismsDiffer>false</organismsDiffer>
    <experiments>5</experiments>
</comment>
<comment type="interaction">
    <interactant intactId="EBI-9057006">
        <id>Q9UJX0</id>
    </interactant>
    <interactant intactId="EBI-296331">
        <id>Q02548</id>
        <label>PAX5</label>
    </interactant>
    <organismsDiffer>false</organismsDiffer>
    <experiments>3</experiments>
</comment>
<comment type="interaction">
    <interactant intactId="EBI-9057006">
        <id>Q9UJX0</id>
    </interactant>
    <interactant intactId="EBI-12080840">
        <id>P27815-4</id>
        <label>PDE4A</label>
    </interactant>
    <organismsDiffer>false</organismsDiffer>
    <experiments>3</experiments>
</comment>
<comment type="interaction">
    <interactant intactId="EBI-9057006">
        <id>Q9UJX0</id>
    </interactant>
    <interactant intactId="EBI-12169289">
        <id>Q08493-2</id>
        <label>PDE4C</label>
    </interactant>
    <organismsDiffer>false</organismsDiffer>
    <experiments>3</experiments>
</comment>
<comment type="interaction">
    <interactant intactId="EBI-9057006">
        <id>Q9UJX0</id>
    </interactant>
    <interactant intactId="EBI-79165">
        <id>Q9NRD5</id>
        <label>PICK1</label>
    </interactant>
    <organismsDiffer>false</organismsDiffer>
    <experiments>3</experiments>
</comment>
<comment type="interaction">
    <interactant intactId="EBI-9057006">
        <id>Q9UJX0</id>
    </interactant>
    <interactant intactId="EBI-10276663">
        <id>Q8WUT1</id>
        <label>POLDIP3</label>
    </interactant>
    <organismsDiffer>false</organismsDiffer>
    <experiments>3</experiments>
</comment>
<comment type="interaction">
    <interactant intactId="EBI-9057006">
        <id>Q9UJX0</id>
    </interactant>
    <interactant intactId="EBI-347928">
        <id>P62487</id>
        <label>POLR2G</label>
    </interactant>
    <organismsDiffer>false</organismsDiffer>
    <experiments>3</experiments>
</comment>
<comment type="interaction">
    <interactant intactId="EBI-9057006">
        <id>Q9UJX0</id>
    </interactant>
    <interactant intactId="EBI-307352">
        <id>Q04864</id>
        <label>REL</label>
    </interactant>
    <organismsDiffer>false</organismsDiffer>
    <experiments>3</experiments>
</comment>
<comment type="interaction">
    <interactant intactId="EBI-9057006">
        <id>Q9UJX0</id>
    </interactant>
    <interactant intactId="EBI-10829018">
        <id>Q04864-2</id>
        <label>REL</label>
    </interactant>
    <organismsDiffer>false</organismsDiffer>
    <experiments>3</experiments>
</comment>
<comment type="interaction">
    <interactant intactId="EBI-9057006">
        <id>Q9UJX0</id>
    </interactant>
    <interactant intactId="EBI-3957636">
        <id>Q8IYX7</id>
        <label>SAXO1</label>
    </interactant>
    <organismsDiffer>false</organismsDiffer>
    <experiments>3</experiments>
</comment>
<comment type="interaction">
    <interactant intactId="EBI-9057006">
        <id>Q9UJX0</id>
    </interactant>
    <interactant intactId="EBI-741237">
        <id>O60504</id>
        <label>SORBS3</label>
    </interactant>
    <organismsDiffer>false</organismsDiffer>
    <experiments>3</experiments>
</comment>
<comment type="interaction">
    <interactant intactId="EBI-9057006">
        <id>Q9UJX0</id>
    </interactant>
    <interactant intactId="EBI-722877">
        <id>Q99081</id>
        <label>TCF12</label>
    </interactant>
    <organismsDiffer>false</organismsDiffer>
    <experiments>4</experiments>
</comment>
<comment type="interaction">
    <interactant intactId="EBI-9057006">
        <id>Q9UJX0</id>
    </interactant>
    <interactant intactId="EBI-533224">
        <id>P15884</id>
        <label>TCF4</label>
    </interactant>
    <organismsDiffer>false</organismsDiffer>
    <experiments>4</experiments>
</comment>
<comment type="interaction">
    <interactant intactId="EBI-9057006">
        <id>Q9UJX0</id>
    </interactant>
    <interactant intactId="EBI-717810">
        <id>Q08117</id>
        <label>TLE5</label>
    </interactant>
    <organismsDiffer>false</organismsDiffer>
    <experiments>3</experiments>
</comment>
<comment type="interaction">
    <interactant intactId="EBI-9057006">
        <id>Q9UJX0</id>
    </interactant>
    <interactant intactId="EBI-11741437">
        <id>Q08117-2</id>
        <label>TLE5</label>
    </interactant>
    <organismsDiffer>false</organismsDiffer>
    <experiments>3</experiments>
</comment>
<comment type="interaction">
    <interactant intactId="EBI-9057006">
        <id>Q9UJX0</id>
    </interactant>
    <interactant intactId="EBI-2130429">
        <id>Q9BYV2</id>
        <label>TRIM54</label>
    </interactant>
    <organismsDiffer>false</organismsDiffer>
    <experiments>3</experiments>
</comment>
<comment type="interaction">
    <interactant intactId="EBI-9057006">
        <id>Q9UJX0</id>
    </interactant>
    <interactant intactId="EBI-12287587">
        <id>B2RXF5</id>
        <label>ZBTB42</label>
    </interactant>
    <organismsDiffer>false</organismsDiffer>
    <experiments>3</experiments>
</comment>
<comment type="interaction">
    <interactant intactId="EBI-9057006">
        <id>Q9UJX0</id>
    </interactant>
    <interactant intactId="EBI-14104088">
        <id>Q53FD0-2</id>
        <label>ZC2HC1C</label>
    </interactant>
    <organismsDiffer>false</organismsDiffer>
    <experiments>3</experiments>
</comment>
<comment type="interaction">
    <interactant intactId="EBI-9057006">
        <id>Q9UJX0</id>
    </interactant>
    <interactant intactId="EBI-2818641">
        <id>Q969J2</id>
        <label>ZKSCAN4</label>
    </interactant>
    <organismsDiffer>false</organismsDiffer>
    <experiments>3</experiments>
</comment>
<comment type="subcellular location">
    <subcellularLocation>
        <location evidence="3">Midbody</location>
    </subcellularLocation>
    <text evidence="3">Localizes to the midbody in late cytokinesis.</text>
</comment>
<comment type="tissue specificity">
    <text evidence="1 2">Ubiquitous. Highest expression in the ovary, testis, kidney, skeletal muscle and liver (PubMed:11459809, PubMed:14570898).</text>
</comment>
<comment type="induction">
    <text>By pregnancy.</text>
</comment>
<comment type="miscellaneous">
    <text>Loss of OSGIN1 protein disturbs the balance between cell growth, differentiation, and cell death in normal tissue, resulting in uncontrolled growth and formation of tumors.</text>
</comment>
<comment type="similarity">
    <text evidence="6">Belongs to the OKL38 family.</text>
</comment>
<comment type="sequence caution" evidence="6">
    <conflict type="erroneous initiation">
        <sequence resource="EMBL-CDS" id="AAF06662"/>
    </conflict>
    <text>Truncated N-terminus.</text>
</comment>
<comment type="sequence caution" evidence="6">
    <conflict type="frameshift">
        <sequence resource="EMBL-CDS" id="AAF06662"/>
    </conflict>
</comment>
<comment type="sequence caution" evidence="6">
    <conflict type="erroneous gene model prediction">
        <sequence resource="EMBL-CDS" id="AAK01722"/>
    </conflict>
</comment>
<comment type="sequence caution" evidence="6">
    <conflict type="miscellaneous discrepancy">
        <sequence resource="EMBL-CDS" id="AAP14662"/>
    </conflict>
    <text>Probable cloning artifact.</text>
</comment>
<proteinExistence type="evidence at protein level"/>
<evidence type="ECO:0000269" key="1">
    <source>
    </source>
</evidence>
<evidence type="ECO:0000269" key="2">
    <source>
    </source>
</evidence>
<evidence type="ECO:0000269" key="3">
    <source>
    </source>
</evidence>
<evidence type="ECO:0000303" key="4">
    <source>
    </source>
</evidence>
<evidence type="ECO:0000303" key="5">
    <source>
    </source>
</evidence>
<evidence type="ECO:0000305" key="6"/>
<evidence type="ECO:0000305" key="7">
    <source>
    </source>
</evidence>
<evidence type="ECO:0000312" key="8">
    <source>
        <dbReference type="HGNC" id="HGNC:30093"/>
    </source>
</evidence>
<evidence type="ECO:0007744" key="9">
    <source>
    </source>
</evidence>
<dbReference type="EC" id="1.14.13.-" evidence="3"/>
<dbReference type="EMBL" id="AF334780">
    <property type="protein sequence ID" value="AAK01722.2"/>
    <property type="status" value="ALT_SEQ"/>
    <property type="molecule type" value="Genomic_DNA"/>
</dbReference>
<dbReference type="EMBL" id="AY258066">
    <property type="protein sequence ID" value="AAP14662.1"/>
    <property type="status" value="ALT_SEQ"/>
    <property type="molecule type" value="mRNA"/>
</dbReference>
<dbReference type="EMBL" id="AY258067">
    <property type="protein sequence ID" value="AAP14663.1"/>
    <property type="molecule type" value="mRNA"/>
</dbReference>
<dbReference type="EMBL" id="AY258068">
    <property type="protein sequence ID" value="AAP14664.1"/>
    <property type="molecule type" value="mRNA"/>
</dbReference>
<dbReference type="EMBL" id="AY037158">
    <property type="protein sequence ID" value="AAK67637.1"/>
    <property type="molecule type" value="mRNA"/>
</dbReference>
<dbReference type="EMBL" id="AK290383">
    <property type="protein sequence ID" value="BAF83072.1"/>
    <property type="molecule type" value="mRNA"/>
</dbReference>
<dbReference type="EMBL" id="AC040169">
    <property type="status" value="NOT_ANNOTATED_CDS"/>
    <property type="molecule type" value="Genomic_DNA"/>
</dbReference>
<dbReference type="EMBL" id="CH471114">
    <property type="protein sequence ID" value="EAW95511.1"/>
    <property type="molecule type" value="Genomic_DNA"/>
</dbReference>
<dbReference type="EMBL" id="BC093687">
    <property type="protein sequence ID" value="AAH93687.2"/>
    <property type="molecule type" value="mRNA"/>
</dbReference>
<dbReference type="EMBL" id="BC113417">
    <property type="protein sequence ID" value="AAI13418.2"/>
    <property type="molecule type" value="mRNA"/>
</dbReference>
<dbReference type="EMBL" id="BC032476">
    <property type="protein sequence ID" value="AAH32476.1"/>
    <property type="molecule type" value="mRNA"/>
</dbReference>
<dbReference type="EMBL" id="AF191740">
    <property type="protein sequence ID" value="AAF06662.1"/>
    <property type="status" value="ALT_SEQ"/>
    <property type="molecule type" value="mRNA"/>
</dbReference>
<dbReference type="CCDS" id="CCDS10939.1"/>
<dbReference type="RefSeq" id="NP_892026.1">
    <property type="nucleotide sequence ID" value="NM_182981.3"/>
</dbReference>
<dbReference type="BioGRID" id="118985">
    <property type="interactions" value="59"/>
</dbReference>
<dbReference type="FunCoup" id="Q9UJX0">
    <property type="interactions" value="26"/>
</dbReference>
<dbReference type="IntAct" id="Q9UJX0">
    <property type="interactions" value="48"/>
</dbReference>
<dbReference type="MINT" id="Q9UJX0"/>
<dbReference type="STRING" id="9606.ENSP00000355374"/>
<dbReference type="GlyGen" id="Q9UJX0">
    <property type="glycosylation" value="1 site"/>
</dbReference>
<dbReference type="iPTMnet" id="Q9UJX0"/>
<dbReference type="PhosphoSitePlus" id="Q9UJX0"/>
<dbReference type="BioMuta" id="OSGIN1"/>
<dbReference type="DMDM" id="334302887"/>
<dbReference type="CPTAC" id="CPTAC-1212"/>
<dbReference type="MassIVE" id="Q9UJX0"/>
<dbReference type="PaxDb" id="9606-ENSP00000355374"/>
<dbReference type="PeptideAtlas" id="Q9UJX0"/>
<dbReference type="Pumba" id="Q9UJX0"/>
<dbReference type="Antibodypedia" id="16990">
    <property type="antibodies" value="143 antibodies from 25 providers"/>
</dbReference>
<dbReference type="DNASU" id="29948"/>
<dbReference type="Ensembl" id="ENST00000361711.7">
    <property type="protein sequence ID" value="ENSP00000355374.3"/>
    <property type="gene ID" value="ENSG00000140961.14"/>
</dbReference>
<dbReference type="Ensembl" id="ENST00000393306.6">
    <property type="protein sequence ID" value="ENSP00000376983.1"/>
    <property type="gene ID" value="ENSG00000140961.14"/>
</dbReference>
<dbReference type="GeneID" id="29948"/>
<dbReference type="KEGG" id="hsa:29948"/>
<dbReference type="MANE-Select" id="ENST00000393306.6">
    <property type="protein sequence ID" value="ENSP00000376983.1"/>
    <property type="RefSeq nucleotide sequence ID" value="NM_182981.3"/>
    <property type="RefSeq protein sequence ID" value="NP_892026.1"/>
</dbReference>
<dbReference type="UCSC" id="uc002fha.4">
    <property type="organism name" value="human"/>
</dbReference>
<dbReference type="AGR" id="HGNC:30093"/>
<dbReference type="CTD" id="29948"/>
<dbReference type="DisGeNET" id="29948"/>
<dbReference type="GeneCards" id="OSGIN1"/>
<dbReference type="HGNC" id="HGNC:30093">
    <property type="gene designation" value="OSGIN1"/>
</dbReference>
<dbReference type="HPA" id="ENSG00000140961">
    <property type="expression patterns" value="Tissue enriched (liver)"/>
</dbReference>
<dbReference type="MIM" id="607975">
    <property type="type" value="gene"/>
</dbReference>
<dbReference type="neXtProt" id="NX_Q9UJX0"/>
<dbReference type="OpenTargets" id="ENSG00000140961"/>
<dbReference type="PharmGKB" id="PA162398489"/>
<dbReference type="VEuPathDB" id="HostDB:ENSG00000140961"/>
<dbReference type="eggNOG" id="ENOG502QRUQ">
    <property type="taxonomic scope" value="Eukaryota"/>
</dbReference>
<dbReference type="GeneTree" id="ENSGT00390000006658"/>
<dbReference type="HOGENOM" id="CLU_019308_2_0_1"/>
<dbReference type="InParanoid" id="Q9UJX0"/>
<dbReference type="OMA" id="ASWDIQT"/>
<dbReference type="OrthoDB" id="412005at2759"/>
<dbReference type="PAN-GO" id="Q9UJX0">
    <property type="GO annotations" value="2 GO annotations based on evolutionary models"/>
</dbReference>
<dbReference type="PhylomeDB" id="Q9UJX0"/>
<dbReference type="TreeFam" id="TF313502"/>
<dbReference type="PathwayCommons" id="Q9UJX0"/>
<dbReference type="SignaLink" id="Q9UJX0"/>
<dbReference type="BioGRID-ORCS" id="29948">
    <property type="hits" value="22 hits in 1150 CRISPR screens"/>
</dbReference>
<dbReference type="ChiTaRS" id="OSGIN1">
    <property type="organism name" value="human"/>
</dbReference>
<dbReference type="GenomeRNAi" id="29948"/>
<dbReference type="Pharos" id="Q9UJX0">
    <property type="development level" value="Tbio"/>
</dbReference>
<dbReference type="PRO" id="PR:Q9UJX0"/>
<dbReference type="Proteomes" id="UP000005640">
    <property type="component" value="Chromosome 16"/>
</dbReference>
<dbReference type="RNAct" id="Q9UJX0">
    <property type="molecule type" value="protein"/>
</dbReference>
<dbReference type="Bgee" id="ENSG00000140961">
    <property type="expression patterns" value="Expressed in right lobe of liver and 145 other cell types or tissues"/>
</dbReference>
<dbReference type="ExpressionAtlas" id="Q9UJX0">
    <property type="expression patterns" value="baseline and differential"/>
</dbReference>
<dbReference type="GO" id="GO:0008083">
    <property type="term" value="F:growth factor activity"/>
    <property type="evidence" value="ECO:0000314"/>
    <property type="project" value="UniProtKB"/>
</dbReference>
<dbReference type="GO" id="GO:0030154">
    <property type="term" value="P:cell differentiation"/>
    <property type="evidence" value="ECO:0007669"/>
    <property type="project" value="UniProtKB-KW"/>
</dbReference>
<dbReference type="GO" id="GO:0030308">
    <property type="term" value="P:negative regulation of cell growth"/>
    <property type="evidence" value="ECO:0000314"/>
    <property type="project" value="UniProtKB"/>
</dbReference>
<dbReference type="FunFam" id="3.50.50.60:FF:000152">
    <property type="entry name" value="Oxidative stress-induced growth inhibitor 1"/>
    <property type="match status" value="1"/>
</dbReference>
<dbReference type="Gene3D" id="3.50.50.60">
    <property type="entry name" value="FAD/NAD(P)-binding domain"/>
    <property type="match status" value="1"/>
</dbReference>
<dbReference type="InterPro" id="IPR036188">
    <property type="entry name" value="FAD/NAD-bd_sf"/>
</dbReference>
<dbReference type="InterPro" id="IPR029731">
    <property type="entry name" value="OKL38_fam"/>
</dbReference>
<dbReference type="PANTHER" id="PTHR15192:SF15">
    <property type="entry name" value="OXIDATIVE STRESS-INDUCED GROWTH INHIBITOR 1"/>
    <property type="match status" value="1"/>
</dbReference>
<dbReference type="PANTHER" id="PTHR15192">
    <property type="entry name" value="PROTEIN CBG05349"/>
    <property type="match status" value="1"/>
</dbReference>
<dbReference type="SUPFAM" id="SSF51905">
    <property type="entry name" value="FAD/NAD(P)-binding domain"/>
    <property type="match status" value="1"/>
</dbReference>
<accession>Q9UJX0</accession>
<accession>Q52M33</accession>
<accession>Q86UQ1</accession>
<accession>Q96S88</accession>
<accession>Q9BZ70</accession>
<name>OSGI1_HUMAN</name>
<feature type="chain" id="PRO_0000165371" description="Oxidative stress-induced growth inhibitor 1">
    <location>
        <begin position="1"/>
        <end position="477"/>
    </location>
</feature>
<feature type="modified residue" description="Phosphoserine" evidence="9">
    <location>
        <position position="12"/>
    </location>
</feature>
<feature type="sequence variant" id="VAR_056575" description="In dbSNP:rs35145453.">
    <original>E</original>
    <variation>D</variation>
    <location>
        <position position="356"/>
    </location>
</feature>
<sequence>MSSSRKDHLGASSSEPLPVIIVGNGPSGICLSYLLSGYTPYTKPDAIHPHPLLQRKLTEAPGVSILDQDLDYLSEGLEGRSQSPVALLFDALLRPDTDFGGNMKSVLTWKHRKEHAIPHVVLGRNLPGGAWHSIEGSMVILSQGQWMGLPDLEVKDWMQKKRRGLRNSRATAGDIAHYYRDYVVKKGLGHNFVSGAVVTAVEWGTPDPSSCGAQDSSPLFQVSGFLTRNQAQQPFSLWARNVVLATGTFDSPARLGIPGEALPFIHHELSALEAATRVGAVTPASDPVLIIGAGLSAADAVLYARHYNIPVIHAFRRAVDDPGLVFNQLPKMLYPEYHKVHQMMREQSILSPSPYEGYRSLPRHQLLCFKEDCQAVFQDLEGVEKVFGVSLVLVLIGSHPDLSFLPGAGADFAVDPDQPLSAKRNPIDVDPFTYQSTRQEGLYAMGPLAGDNFVRFVQGGALAVASSLLRKETRKPP</sequence>
<organism>
    <name type="scientific">Homo sapiens</name>
    <name type="common">Human</name>
    <dbReference type="NCBI Taxonomy" id="9606"/>
    <lineage>
        <taxon>Eukaryota</taxon>
        <taxon>Metazoa</taxon>
        <taxon>Chordata</taxon>
        <taxon>Craniata</taxon>
        <taxon>Vertebrata</taxon>
        <taxon>Euteleostomi</taxon>
        <taxon>Mammalia</taxon>
        <taxon>Eutheria</taxon>
        <taxon>Euarchontoglires</taxon>
        <taxon>Primates</taxon>
        <taxon>Haplorrhini</taxon>
        <taxon>Catarrhini</taxon>
        <taxon>Hominidae</taxon>
        <taxon>Homo</taxon>
    </lineage>
</organism>
<gene>
    <name evidence="8" type="primary">OSGIN1</name>
    <name evidence="5" type="synonym">BDGI</name>
    <name evidence="4" type="synonym">OKL38</name>
</gene>